<accession>P44514</accession>
<reference key="1">
    <citation type="journal article" date="1995" name="Science">
        <title>Whole-genome random sequencing and assembly of Haemophilus influenzae Rd.</title>
        <authorList>
            <person name="Fleischmann R.D."/>
            <person name="Adams M.D."/>
            <person name="White O."/>
            <person name="Clayton R.A."/>
            <person name="Kirkness E.F."/>
            <person name="Kerlavage A.R."/>
            <person name="Bult C.J."/>
            <person name="Tomb J.-F."/>
            <person name="Dougherty B.A."/>
            <person name="Merrick J.M."/>
            <person name="McKenney K."/>
            <person name="Sutton G.G."/>
            <person name="FitzHugh W."/>
            <person name="Fields C.A."/>
            <person name="Gocayne J.D."/>
            <person name="Scott J.D."/>
            <person name="Shirley R."/>
            <person name="Liu L.-I."/>
            <person name="Glodek A."/>
            <person name="Kelley J.M."/>
            <person name="Weidman J.F."/>
            <person name="Phillips C.A."/>
            <person name="Spriggs T."/>
            <person name="Hedblom E."/>
            <person name="Cotton M.D."/>
            <person name="Utterback T.R."/>
            <person name="Hanna M.C."/>
            <person name="Nguyen D.T."/>
            <person name="Saudek D.M."/>
            <person name="Brandon R.C."/>
            <person name="Fine L.D."/>
            <person name="Fritchman J.L."/>
            <person name="Fuhrmann J.L."/>
            <person name="Geoghagen N.S.M."/>
            <person name="Gnehm C.L."/>
            <person name="McDonald L.A."/>
            <person name="Small K.V."/>
            <person name="Fraser C.M."/>
            <person name="Smith H.O."/>
            <person name="Venter J.C."/>
        </authorList>
    </citation>
    <scope>NUCLEOTIDE SEQUENCE [LARGE SCALE GENOMIC DNA]</scope>
    <source>
        <strain>ATCC 51907 / DSM 11121 / KW20 / Rd</strain>
    </source>
</reference>
<reference key="2">
    <citation type="journal article" date="1998" name="Biochemistry">
        <title>Hydrolysis of N-succinyl-L,L-diaminopimelic acid by the Haemophilus influenzae dapE-encoded desuccinylase: metal activation, solvent isotope effects, and kinetic mechanism.</title>
        <authorList>
            <person name="Born T.L."/>
            <person name="Zheng R."/>
            <person name="Blanchard J.S."/>
        </authorList>
    </citation>
    <scope>PROTEIN SEQUENCE OF 1-10</scope>
    <scope>MASS SPECTROMETRY</scope>
    <scope>BIOPHYSICOCHEMICAL PROPERTIES</scope>
    <scope>ACTIVITY REGULATION</scope>
</reference>
<reference key="3">
    <citation type="journal article" date="2003" name="Biochemistry">
        <title>Substrate specificity, metal binding properties, and spectroscopic characterization of the DapE-encoded N-succinyl-L,L-diaminopimelic acid desuccinylase from Haemophilus influenzae.</title>
        <authorList>
            <person name="Bienvenue D.L."/>
            <person name="Gilner D.M."/>
            <person name="Davis R.S."/>
            <person name="Bennett B."/>
            <person name="Holz R.C."/>
        </authorList>
    </citation>
    <scope>FUNCTION</scope>
    <scope>CATALYTIC ACTIVITY</scope>
    <scope>BIOPHYSICOCHEMICAL PROPERTIES</scope>
    <scope>SUBSTRATE SPECIFICITY</scope>
    <scope>COFACTOR</scope>
</reference>
<reference key="4">
    <citation type="journal article" date="2003" name="J. Am. Chem. Soc.">
        <title>The dapE-encoded N-succinyl-L,L-diaminopimelic acid desuccinylase from Haemophilus influenzae is a dinuclear metallohydrolase.</title>
        <authorList>
            <person name="Cosper N.J."/>
            <person name="Bienvenue D.L."/>
            <person name="Shokes J.E."/>
            <person name="Gilner D.M."/>
            <person name="Tsukamoto T."/>
            <person name="Scott R.A."/>
            <person name="Holz R.C."/>
        </authorList>
    </citation>
    <scope>COFACTOR</scope>
    <scope>ACTIVITY REGULATION</scope>
</reference>
<reference key="5">
    <citation type="journal article" date="2006" name="J. Biol. Inorg. Chem.">
        <title>Kinetic and spectroscopic characterization of the E134A- and E134D-altered dapE-encoded N-succinyl-L,L-diaminopimelic acid desuccinylase from Haemophilus influenzae.</title>
        <authorList>
            <person name="Davis R."/>
            <person name="Bienvenue D."/>
            <person name="Swierczek S.I."/>
            <person name="Gilner D.M."/>
            <person name="Rajagopal L."/>
            <person name="Bennett B."/>
            <person name="Holz R.C."/>
        </authorList>
    </citation>
    <scope>FUNCTION</scope>
    <scope>MUTAGENESIS OF GLU-134</scope>
    <scope>BIOPHYSICOCHEMICAL PROPERTIES</scope>
    <scope>REACTION MECHANISM</scope>
</reference>
<reference key="6">
    <citation type="journal article" date="2009" name="J. Biol. Inorg. Chem.">
        <title>The dapE-encoded N-succinyl-L,L-diaminopimelic acid desuccinylase from Haemophilus influenzae contains two active-site histidine residues.</title>
        <authorList>
            <person name="Gillner D.M."/>
            <person name="Bienvenue D.L."/>
            <person name="Nocek B.P."/>
            <person name="Joachimiak A."/>
            <person name="Zachary V."/>
            <person name="Bennett B."/>
            <person name="Holz R.C."/>
        </authorList>
    </citation>
    <scope>FUNCTION</scope>
    <scope>CATALYTIC ACTIVITY</scope>
    <scope>MUTAGENESIS OF HIS-67 AND HIS-349</scope>
    <scope>COFACTOR</scope>
</reference>
<reference key="7">
    <citation type="journal article" date="2011" name="Bioinorg. Chem. Appl.">
        <title>Selectivity of inhibition of N-succinyl-L,L-diaminopimelic acid desuccinylase in bacteria: The product of dapE-gene is not the target of L-captopril antimicrobial activity.</title>
        <authorList>
            <person name="Uda N.R."/>
            <person name="Creus M."/>
        </authorList>
    </citation>
    <scope>ACTIVITY REGULATION</scope>
</reference>
<reference evidence="10 11" key="8">
    <citation type="journal article" date="2010" name="J. Mol. Biol.">
        <title>Structural basis for catalysis by the mono- and dimetalated forms of the dapE-encoded N-succinyl-L,L-diaminopimelic acid desuccinylase.</title>
        <authorList>
            <person name="Nocek B.P."/>
            <person name="Gillner D.M."/>
            <person name="Fan Y."/>
            <person name="Holz R.C."/>
            <person name="Joachimiak A."/>
        </authorList>
    </citation>
    <scope>X-RAY CRYSTALLOGRAPHY (2.0 ANGSTROMS) IN COMPLEX WITH ZINC IONS</scope>
    <scope>COFACTOR</scope>
    <scope>REACTION MECHANISM</scope>
    <scope>ACTIVE SITE</scope>
    <scope>SUBUNIT</scope>
</reference>
<comment type="function">
    <text evidence="1 3 4">Catalyzes the hydrolysis of N-succinyl-L,L-diaminopimelic acid (SDAP), forming succinate and LL-2,6-diaminopimelate (DAP), an intermediate involved in the bacterial biosynthesis of lysine and meso-diaminopimelic acid, an essential component of bacterial cell walls. It can only hydrolyze L,L-N-succinyl-diaminopimelic acid (L,L-SDAP) and is inactive toward D,L-, L,D-, and D,D-SDAP.</text>
</comment>
<comment type="catalytic activity">
    <reaction evidence="1 4">
        <text>N-succinyl-(2S,6S)-2,6-diaminopimelate + H2O = (2S,6S)-2,6-diaminopimelate + succinate</text>
        <dbReference type="Rhea" id="RHEA:22608"/>
        <dbReference type="ChEBI" id="CHEBI:15377"/>
        <dbReference type="ChEBI" id="CHEBI:30031"/>
        <dbReference type="ChEBI" id="CHEBI:57609"/>
        <dbReference type="ChEBI" id="CHEBI:58087"/>
        <dbReference type="EC" id="3.5.1.18"/>
    </reaction>
</comment>
<comment type="cofactor">
    <cofactor evidence="5">
        <name>Zn(2+)</name>
        <dbReference type="ChEBI" id="CHEBI:29105"/>
    </cofactor>
    <text evidence="5">Binds 2 Zn(2+) ion per subunit.</text>
</comment>
<comment type="activity regulation">
    <text evidence="2 6 7">Competitively inhibited by L,L-DAP, D,L-DAP, 2-carboxyethylphosphonic acid (CEPA) and 5-mercaptopentanoic acid (MSPA). Succinate is a poor inhibitor.</text>
</comment>
<comment type="biophysicochemical properties">
    <kinetics>
        <KM evidence="1 3 7">0.73 mM for zinc ion (at 30 degrees Celsius and at pH 7.5)</KM>
        <KM evidence="1 3 7">0.73 mM for L,L-SDAP (at 30 degrees Celsius and at pH 7.5)</KM>
        <KM evidence="1 3 7">0.99 mM for cobalt ion (at 30 degrees Celsius and at pH 7.5)</KM>
        <KM evidence="1 3 7">1.3 mM for L,L-SDAP (in the presence of Zn(2+) at 25 degrees Celsius and at pH 7.6)</KM>
        <KM evidence="1 3 7">1.6 mM for L,L-SDAP (in the presence of Co(2+) at 25 degrees Celsius and at pH 7.6)</KM>
        <KM evidence="1 3 7">3.2 mM for a mixture of L,L-SDAP and D,D-SDAP (in the presence of Zn(2+) at 25 degrees Celsius and at pH 7.6)</KM>
        <KM evidence="1 3 7">4.7 mM for a mixture of L,L-SDAP and D,D-SDAP (in the presence of Co(2+) at 25 degrees Celsius and at pH 7.6)</KM>
    </kinetics>
    <phDependence>
        <text evidence="1 3 7">Optimum pH is 7.0 in the presence of Zn(2+). The maximal velocities are independent of pH in the alkaline region but decrease below pH 7.0.</text>
    </phDependence>
</comment>
<comment type="pathway">
    <text>Amino-acid biosynthesis; L-lysine biosynthesis via DAP pathway; LL-2,6-diaminopimelate from (S)-tetrahydrodipicolinate (succinylase route): step 3/3.</text>
</comment>
<comment type="subunit">
    <text evidence="5">Homodimer.</text>
</comment>
<comment type="mass spectrometry"/>
<comment type="similarity">
    <text evidence="8">Belongs to the peptidase M20A family. DapE subfamily.</text>
</comment>
<gene>
    <name type="primary">dapE</name>
    <name type="ordered locus">HI_0102</name>
</gene>
<keyword id="KW-0002">3D-structure</keyword>
<keyword id="KW-0028">Amino-acid biosynthesis</keyword>
<keyword id="KW-0170">Cobalt</keyword>
<keyword id="KW-0220">Diaminopimelate biosynthesis</keyword>
<keyword id="KW-0903">Direct protein sequencing</keyword>
<keyword id="KW-0378">Hydrolase</keyword>
<keyword id="KW-0457">Lysine biosynthesis</keyword>
<keyword id="KW-0479">Metal-binding</keyword>
<keyword id="KW-1185">Reference proteome</keyword>
<keyword id="KW-0862">Zinc</keyword>
<sequence>MKEKVVSLAQDLIRRPSISPNDEGCQQIIAERLEKLGFQIEWMPFNDTLNLWAKHGTSEPVIAFAGHTDVVPTGDENQWSSPPFSAEIIDGMLYGRGAADMKGSLAAMIVAAEEYVKANPNHKGTIALLITSDEEATAKDGTIHVVETLMARDEKITYCMVGEPSSAKNLGDVVKNGRRGSITGNLYIQGIQGHVAYPHLAENPIHKAALFLQELTTYQWDKGNEFFPPTSLQIANIHAGTGSNNVIPAELYIQFNLRYCTEVTDEIIKQKVAEMLEKHNLKYRIEWNLSGKPFLTKPGKLLDSITSAIEETIGITPKAETGGGTSDGRFIALMGAEVVEFGPLNSTIHKVNECVSVEDLGKCGEIYHKMLVNLLDS</sequence>
<evidence type="ECO:0000269" key="1">
    <source>
    </source>
</evidence>
<evidence type="ECO:0000269" key="2">
    <source>
    </source>
</evidence>
<evidence type="ECO:0000269" key="3">
    <source>
    </source>
</evidence>
<evidence type="ECO:0000269" key="4">
    <source>
    </source>
</evidence>
<evidence type="ECO:0000269" key="5">
    <source>
    </source>
</evidence>
<evidence type="ECO:0000269" key="6">
    <source>
    </source>
</evidence>
<evidence type="ECO:0000269" key="7">
    <source>
    </source>
</evidence>
<evidence type="ECO:0000305" key="8"/>
<evidence type="ECO:0000305" key="9">
    <source>
    </source>
</evidence>
<evidence type="ECO:0007744" key="10">
    <source>
        <dbReference type="PDB" id="3IC1"/>
    </source>
</evidence>
<evidence type="ECO:0007744" key="11">
    <source>
        <dbReference type="PDB" id="3ISZ"/>
    </source>
</evidence>
<evidence type="ECO:0007744" key="12">
    <source>
        <dbReference type="PDB" id="4H2K"/>
    </source>
</evidence>
<evidence type="ECO:0007829" key="13">
    <source>
        <dbReference type="PDB" id="3IC1"/>
    </source>
</evidence>
<evidence type="ECO:0007829" key="14">
    <source>
        <dbReference type="PDB" id="4H2K"/>
    </source>
</evidence>
<evidence type="ECO:0007829" key="15">
    <source>
        <dbReference type="PDB" id="5VO3"/>
    </source>
</evidence>
<proteinExistence type="evidence at protein level"/>
<name>DAPE_HAEIN</name>
<organism>
    <name type="scientific">Haemophilus influenzae (strain ATCC 51907 / DSM 11121 / KW20 / Rd)</name>
    <dbReference type="NCBI Taxonomy" id="71421"/>
    <lineage>
        <taxon>Bacteria</taxon>
        <taxon>Pseudomonadati</taxon>
        <taxon>Pseudomonadota</taxon>
        <taxon>Gammaproteobacteria</taxon>
        <taxon>Pasteurellales</taxon>
        <taxon>Pasteurellaceae</taxon>
        <taxon>Haemophilus</taxon>
    </lineage>
</organism>
<feature type="chain" id="PRO_0000185262" description="Succinyl-diaminopimelate desuccinylase">
    <location>
        <begin position="1"/>
        <end position="377"/>
    </location>
</feature>
<feature type="active site" evidence="9">
    <location>
        <position position="69"/>
    </location>
</feature>
<feature type="active site" description="Proton acceptor" evidence="5">
    <location>
        <position position="134"/>
    </location>
</feature>
<feature type="binding site" evidence="5 10 11 12">
    <location>
        <position position="67"/>
    </location>
    <ligand>
        <name>Zn(2+)</name>
        <dbReference type="ChEBI" id="CHEBI:29105"/>
        <label>1</label>
    </ligand>
</feature>
<feature type="binding site" evidence="5 10 11 12">
    <location>
        <position position="100"/>
    </location>
    <ligand>
        <name>Zn(2+)</name>
        <dbReference type="ChEBI" id="CHEBI:29105"/>
        <label>1</label>
    </ligand>
</feature>
<feature type="binding site" evidence="5 10 12">
    <location>
        <position position="100"/>
    </location>
    <ligand>
        <name>Zn(2+)</name>
        <dbReference type="ChEBI" id="CHEBI:29105"/>
        <label>2</label>
    </ligand>
</feature>
<feature type="binding site" evidence="5 10 12">
    <location>
        <position position="135"/>
    </location>
    <ligand>
        <name>Zn(2+)</name>
        <dbReference type="ChEBI" id="CHEBI:29105"/>
        <label>2</label>
    </ligand>
</feature>
<feature type="binding site" evidence="5 10 11 12">
    <location>
        <position position="163"/>
    </location>
    <ligand>
        <name>Zn(2+)</name>
        <dbReference type="ChEBI" id="CHEBI:29105"/>
        <label>1</label>
    </ligand>
</feature>
<feature type="binding site" evidence="5 10 12">
    <location>
        <position position="349"/>
    </location>
    <ligand>
        <name>Zn(2+)</name>
        <dbReference type="ChEBI" id="CHEBI:29105"/>
        <label>2</label>
    </ligand>
</feature>
<feature type="mutagenesis site" description="Reduction of affinity for L,L-SDAP and of catalytic efficiency." evidence="4">
    <original>H</original>
    <variation>A</variation>
    <location>
        <position position="67"/>
    </location>
</feature>
<feature type="mutagenesis site" description="Absence of desuccinylase activity." evidence="3">
    <original>E</original>
    <variation>A</variation>
    <location>
        <position position="134"/>
    </location>
</feature>
<feature type="mutagenesis site" description="Reduction of the catalytic efficiency." evidence="3">
    <original>E</original>
    <variation>D</variation>
    <location>
        <position position="134"/>
    </location>
</feature>
<feature type="mutagenesis site" description="Absence of desuccinylase activity and of zinc ion." evidence="4">
    <original>H</original>
    <variation>A</variation>
    <location>
        <position position="349"/>
    </location>
</feature>
<feature type="helix" evidence="14">
    <location>
        <begin position="1"/>
        <end position="13"/>
    </location>
</feature>
<feature type="helix" evidence="14">
    <location>
        <begin position="25"/>
        <end position="34"/>
    </location>
</feature>
<feature type="turn" evidence="14">
    <location>
        <begin position="35"/>
        <end position="37"/>
    </location>
</feature>
<feature type="strand" evidence="14">
    <location>
        <begin position="39"/>
        <end position="42"/>
    </location>
</feature>
<feature type="strand" evidence="14">
    <location>
        <begin position="50"/>
        <end position="55"/>
    </location>
</feature>
<feature type="strand" evidence="14">
    <location>
        <begin position="57"/>
        <end position="59"/>
    </location>
</feature>
<feature type="strand" evidence="14">
    <location>
        <begin position="61"/>
        <end position="67"/>
    </location>
</feature>
<feature type="helix" evidence="14">
    <location>
        <begin position="76"/>
        <end position="78"/>
    </location>
</feature>
<feature type="strand" evidence="15">
    <location>
        <begin position="79"/>
        <end position="81"/>
    </location>
</feature>
<feature type="turn" evidence="13">
    <location>
        <begin position="83"/>
        <end position="85"/>
    </location>
</feature>
<feature type="strand" evidence="14">
    <location>
        <begin position="92"/>
        <end position="95"/>
    </location>
</feature>
<feature type="turn" evidence="14">
    <location>
        <begin position="96"/>
        <end position="101"/>
    </location>
</feature>
<feature type="helix" evidence="14">
    <location>
        <begin position="102"/>
        <end position="118"/>
    </location>
</feature>
<feature type="strand" evidence="14">
    <location>
        <begin position="123"/>
        <end position="132"/>
    </location>
</feature>
<feature type="strand" evidence="14">
    <location>
        <begin position="134"/>
        <end position="136"/>
    </location>
</feature>
<feature type="strand" evidence="15">
    <location>
        <begin position="139"/>
        <end position="141"/>
    </location>
</feature>
<feature type="helix" evidence="14">
    <location>
        <begin position="142"/>
        <end position="151"/>
    </location>
</feature>
<feature type="strand" evidence="14">
    <location>
        <begin position="158"/>
        <end position="161"/>
    </location>
</feature>
<feature type="strand" evidence="14">
    <location>
        <begin position="166"/>
        <end position="169"/>
    </location>
</feature>
<feature type="strand" evidence="14">
    <location>
        <begin position="172"/>
        <end position="175"/>
    </location>
</feature>
<feature type="strand" evidence="15">
    <location>
        <begin position="180"/>
        <end position="189"/>
    </location>
</feature>
<feature type="helix" evidence="15">
    <location>
        <begin position="198"/>
        <end position="200"/>
    </location>
</feature>
<feature type="helix" evidence="15">
    <location>
        <begin position="204"/>
        <end position="217"/>
    </location>
</feature>
<feature type="strand" evidence="15">
    <location>
        <begin position="225"/>
        <end position="227"/>
    </location>
</feature>
<feature type="strand" evidence="15">
    <location>
        <begin position="231"/>
        <end position="238"/>
    </location>
</feature>
<feature type="strand" evidence="15">
    <location>
        <begin position="244"/>
        <end position="247"/>
    </location>
</feature>
<feature type="strand" evidence="15">
    <location>
        <begin position="249"/>
        <end position="259"/>
    </location>
</feature>
<feature type="helix" evidence="15">
    <location>
        <begin position="265"/>
        <end position="278"/>
    </location>
</feature>
<feature type="strand" evidence="15">
    <location>
        <begin position="283"/>
        <end position="291"/>
    </location>
</feature>
<feature type="helix" evidence="14">
    <location>
        <begin position="300"/>
        <end position="313"/>
    </location>
</feature>
<feature type="strand" evidence="14">
    <location>
        <begin position="318"/>
        <end position="320"/>
    </location>
</feature>
<feature type="helix" evidence="14">
    <location>
        <begin position="326"/>
        <end position="332"/>
    </location>
</feature>
<feature type="turn" evidence="14">
    <location>
        <begin position="333"/>
        <end position="335"/>
    </location>
</feature>
<feature type="strand" evidence="14">
    <location>
        <begin position="337"/>
        <end position="340"/>
    </location>
</feature>
<feature type="turn" evidence="14">
    <location>
        <begin position="346"/>
        <end position="349"/>
    </location>
</feature>
<feature type="strand" evidence="14">
    <location>
        <begin position="354"/>
        <end position="356"/>
    </location>
</feature>
<feature type="helix" evidence="14">
    <location>
        <begin position="357"/>
        <end position="374"/>
    </location>
</feature>
<protein>
    <recommendedName>
        <fullName>Succinyl-diaminopimelate desuccinylase</fullName>
        <shortName>SDAP desuccinylase</shortName>
        <ecNumber>3.5.1.18</ecNumber>
    </recommendedName>
    <alternativeName>
        <fullName>N-succinyl-LL-2,6-diaminoheptanedioate amidohydrolase</fullName>
    </alternativeName>
</protein>
<dbReference type="EC" id="3.5.1.18"/>
<dbReference type="EMBL" id="L42023">
    <property type="protein sequence ID" value="AAC21776.1"/>
    <property type="molecule type" value="Genomic_DNA"/>
</dbReference>
<dbReference type="PIR" id="F64048">
    <property type="entry name" value="F64048"/>
</dbReference>
<dbReference type="RefSeq" id="NP_438276.1">
    <property type="nucleotide sequence ID" value="NC_000907.1"/>
</dbReference>
<dbReference type="PDB" id="3IC1">
    <property type="method" value="X-ray"/>
    <property type="resolution" value="2.30 A"/>
    <property type="chains" value="A/B=1-377"/>
</dbReference>
<dbReference type="PDB" id="3ISZ">
    <property type="method" value="X-ray"/>
    <property type="resolution" value="2.00 A"/>
    <property type="chains" value="A/B=1-377"/>
</dbReference>
<dbReference type="PDB" id="4H2K">
    <property type="method" value="X-ray"/>
    <property type="resolution" value="1.84 A"/>
    <property type="chains" value="A/B=1-180, A/B=294-377"/>
</dbReference>
<dbReference type="PDB" id="5VO3">
    <property type="method" value="X-ray"/>
    <property type="resolution" value="1.95 A"/>
    <property type="chains" value="A=1-376"/>
</dbReference>
<dbReference type="PDBsum" id="3IC1"/>
<dbReference type="PDBsum" id="3ISZ"/>
<dbReference type="PDBsum" id="4H2K"/>
<dbReference type="PDBsum" id="5VO3"/>
<dbReference type="SMR" id="P44514"/>
<dbReference type="STRING" id="71421.HI_0102"/>
<dbReference type="BindingDB" id="P44514"/>
<dbReference type="ChEMBL" id="CHEMBL1075192"/>
<dbReference type="DrugCentral" id="P44514"/>
<dbReference type="EnsemblBacteria" id="AAC21776">
    <property type="protein sequence ID" value="AAC21776"/>
    <property type="gene ID" value="HI_0102"/>
</dbReference>
<dbReference type="KEGG" id="hin:HI_0102"/>
<dbReference type="PATRIC" id="fig|71421.8.peg.105"/>
<dbReference type="eggNOG" id="COG0624">
    <property type="taxonomic scope" value="Bacteria"/>
</dbReference>
<dbReference type="HOGENOM" id="CLU_021802_4_0_6"/>
<dbReference type="OrthoDB" id="9809784at2"/>
<dbReference type="PhylomeDB" id="P44514"/>
<dbReference type="BioCyc" id="HINF71421:G1GJ1-106-MONOMER"/>
<dbReference type="BioCyc" id="MetaCyc:MONOMER-6421"/>
<dbReference type="BRENDA" id="3.5.1.18">
    <property type="organism ID" value="2529"/>
</dbReference>
<dbReference type="SABIO-RK" id="P44514"/>
<dbReference type="UniPathway" id="UPA00034">
    <property type="reaction ID" value="UER00021"/>
</dbReference>
<dbReference type="EvolutionaryTrace" id="P44514"/>
<dbReference type="Proteomes" id="UP000000579">
    <property type="component" value="Chromosome"/>
</dbReference>
<dbReference type="GO" id="GO:0005829">
    <property type="term" value="C:cytosol"/>
    <property type="evidence" value="ECO:0000318"/>
    <property type="project" value="GO_Central"/>
</dbReference>
<dbReference type="GO" id="GO:0050897">
    <property type="term" value="F:cobalt ion binding"/>
    <property type="evidence" value="ECO:0007669"/>
    <property type="project" value="UniProtKB-UniRule"/>
</dbReference>
<dbReference type="GO" id="GO:0009014">
    <property type="term" value="F:succinyl-diaminopimelate desuccinylase activity"/>
    <property type="evidence" value="ECO:0000318"/>
    <property type="project" value="GO_Central"/>
</dbReference>
<dbReference type="GO" id="GO:0008270">
    <property type="term" value="F:zinc ion binding"/>
    <property type="evidence" value="ECO:0007669"/>
    <property type="project" value="UniProtKB-UniRule"/>
</dbReference>
<dbReference type="GO" id="GO:0019877">
    <property type="term" value="P:diaminopimelate biosynthetic process"/>
    <property type="evidence" value="ECO:0007669"/>
    <property type="project" value="UniProtKB-UniRule"/>
</dbReference>
<dbReference type="GO" id="GO:0009089">
    <property type="term" value="P:lysine biosynthetic process via diaminopimelate"/>
    <property type="evidence" value="ECO:0000318"/>
    <property type="project" value="GO_Central"/>
</dbReference>
<dbReference type="CDD" id="cd03891">
    <property type="entry name" value="M20_DapE_proteobac"/>
    <property type="match status" value="1"/>
</dbReference>
<dbReference type="FunFam" id="3.30.70.360:FF:000011">
    <property type="entry name" value="Succinyl-diaminopimelate desuccinylase"/>
    <property type="match status" value="1"/>
</dbReference>
<dbReference type="FunFam" id="3.40.630.10:FF:000005">
    <property type="entry name" value="Succinyl-diaminopimelate desuccinylase"/>
    <property type="match status" value="1"/>
</dbReference>
<dbReference type="Gene3D" id="3.30.70.360">
    <property type="match status" value="1"/>
</dbReference>
<dbReference type="Gene3D" id="3.40.630.10">
    <property type="entry name" value="Zn peptidases"/>
    <property type="match status" value="2"/>
</dbReference>
<dbReference type="HAMAP" id="MF_01690">
    <property type="entry name" value="DapE"/>
    <property type="match status" value="1"/>
</dbReference>
<dbReference type="InterPro" id="IPR001261">
    <property type="entry name" value="ArgE/DapE_CS"/>
</dbReference>
<dbReference type="InterPro" id="IPR036264">
    <property type="entry name" value="Bact_exopeptidase_dim_dom"/>
</dbReference>
<dbReference type="InterPro" id="IPR005941">
    <property type="entry name" value="DapE_proteobac"/>
</dbReference>
<dbReference type="InterPro" id="IPR002933">
    <property type="entry name" value="Peptidase_M20"/>
</dbReference>
<dbReference type="InterPro" id="IPR011650">
    <property type="entry name" value="Peptidase_M20_dimer"/>
</dbReference>
<dbReference type="InterPro" id="IPR050072">
    <property type="entry name" value="Peptidase_M20A"/>
</dbReference>
<dbReference type="NCBIfam" id="TIGR01246">
    <property type="entry name" value="dapE_proteo"/>
    <property type="match status" value="1"/>
</dbReference>
<dbReference type="NCBIfam" id="NF009557">
    <property type="entry name" value="PRK13009.1"/>
    <property type="match status" value="1"/>
</dbReference>
<dbReference type="PANTHER" id="PTHR43808">
    <property type="entry name" value="ACETYLORNITHINE DEACETYLASE"/>
    <property type="match status" value="1"/>
</dbReference>
<dbReference type="PANTHER" id="PTHR43808:SF31">
    <property type="entry name" value="N-ACETYL-L-CITRULLINE DEACETYLASE"/>
    <property type="match status" value="1"/>
</dbReference>
<dbReference type="Pfam" id="PF07687">
    <property type="entry name" value="M20_dimer"/>
    <property type="match status" value="1"/>
</dbReference>
<dbReference type="Pfam" id="PF01546">
    <property type="entry name" value="Peptidase_M20"/>
    <property type="match status" value="1"/>
</dbReference>
<dbReference type="SUPFAM" id="SSF55031">
    <property type="entry name" value="Bacterial exopeptidase dimerisation domain"/>
    <property type="match status" value="1"/>
</dbReference>
<dbReference type="SUPFAM" id="SSF53187">
    <property type="entry name" value="Zn-dependent exopeptidases"/>
    <property type="match status" value="1"/>
</dbReference>
<dbReference type="PROSITE" id="PS00758">
    <property type="entry name" value="ARGE_DAPE_CPG2_1"/>
    <property type="match status" value="1"/>
</dbReference>
<dbReference type="PROSITE" id="PS00759">
    <property type="entry name" value="ARGE_DAPE_CPG2_2"/>
    <property type="match status" value="1"/>
</dbReference>